<gene>
    <name evidence="1" type="primary">ybhG</name>
    <name type="ordered locus">Ecok1_06820</name>
    <name type="ORF">APECO1_1295</name>
</gene>
<sequence>MMKKPVVIGLAVVVLAAVVAGGYWWYQSRQDNGLTLYGNVDIRTVNLSFRVGGRVESLAVDEGDAIKAGQVLGELDHKPYEIALMQAKAGVSVAQAQYDLMLAGYRDEEIAQAAAAVKQAQAAYDYAQNFYNRQQGLWKSRTISANDLENARSSRDQAQATLKSAQDKLRQYRSGNREQDIAQAKASLEQAQAQLAQAELNLQDSTLIAPSDGTLLTRAVEPGTVLNEGGTVFTVSLTRPVWVRAYVDERNLDQAQPGRKVLLYTDGRPNKPYHGQIGFVSPTAEFTPKTVETPDLRTDLVYRLRIVVTDADDALRQGMPVTVQFGDEAGHE</sequence>
<keyword id="KW-0175">Coiled coil</keyword>
<keyword id="KW-0574">Periplasm</keyword>
<keyword id="KW-1185">Reference proteome</keyword>
<keyword id="KW-0732">Signal</keyword>
<comment type="subcellular location">
    <subcellularLocation>
        <location evidence="1">Periplasm</location>
    </subcellularLocation>
</comment>
<comment type="similarity">
    <text evidence="1">Belongs to the UPF0194 family.</text>
</comment>
<feature type="signal peptide" evidence="1">
    <location>
        <begin position="1"/>
        <end position="16"/>
    </location>
</feature>
<feature type="chain" id="PRO_1000051809" description="UPF0194 membrane protein YbhG">
    <location>
        <begin position="17"/>
        <end position="332"/>
    </location>
</feature>
<feature type="coiled-coil region" evidence="1">
    <location>
        <begin position="108"/>
        <end position="209"/>
    </location>
</feature>
<name>YBHG_ECOK1</name>
<organism>
    <name type="scientific">Escherichia coli O1:K1 / APEC</name>
    <dbReference type="NCBI Taxonomy" id="405955"/>
    <lineage>
        <taxon>Bacteria</taxon>
        <taxon>Pseudomonadati</taxon>
        <taxon>Pseudomonadota</taxon>
        <taxon>Gammaproteobacteria</taxon>
        <taxon>Enterobacterales</taxon>
        <taxon>Enterobacteriaceae</taxon>
        <taxon>Escherichia</taxon>
    </lineage>
</organism>
<dbReference type="EMBL" id="CP000468">
    <property type="protein sequence ID" value="ABJ00176.1"/>
    <property type="molecule type" value="Genomic_DNA"/>
</dbReference>
<dbReference type="SMR" id="A1A936"/>
<dbReference type="KEGG" id="ecv:APECO1_1295"/>
<dbReference type="HOGENOM" id="CLU_018816_6_3_6"/>
<dbReference type="Proteomes" id="UP000008216">
    <property type="component" value="Chromosome"/>
</dbReference>
<dbReference type="GO" id="GO:0042597">
    <property type="term" value="C:periplasmic space"/>
    <property type="evidence" value="ECO:0007669"/>
    <property type="project" value="UniProtKB-SubCell"/>
</dbReference>
<dbReference type="FunFam" id="1.10.287.470:FF:000004">
    <property type="entry name" value="UPF0194 membrane protein YbhG"/>
    <property type="match status" value="1"/>
</dbReference>
<dbReference type="FunFam" id="2.40.50.100:FF:000025">
    <property type="entry name" value="UPF0194 membrane protein YbhG"/>
    <property type="match status" value="1"/>
</dbReference>
<dbReference type="Gene3D" id="2.40.30.170">
    <property type="match status" value="1"/>
</dbReference>
<dbReference type="Gene3D" id="2.40.50.100">
    <property type="match status" value="2"/>
</dbReference>
<dbReference type="Gene3D" id="1.10.287.470">
    <property type="entry name" value="Helix hairpin bin"/>
    <property type="match status" value="1"/>
</dbReference>
<dbReference type="HAMAP" id="MF_01304">
    <property type="entry name" value="UPF0194"/>
    <property type="match status" value="1"/>
</dbReference>
<dbReference type="InterPro" id="IPR032317">
    <property type="entry name" value="CusB_D23"/>
</dbReference>
<dbReference type="InterPro" id="IPR022936">
    <property type="entry name" value="UPF0194_membrane_YbhG"/>
</dbReference>
<dbReference type="InterPro" id="IPR050465">
    <property type="entry name" value="UPF0194_transport"/>
</dbReference>
<dbReference type="NCBIfam" id="NF002939">
    <property type="entry name" value="PRK03598.1"/>
    <property type="match status" value="1"/>
</dbReference>
<dbReference type="PANTHER" id="PTHR32347">
    <property type="entry name" value="EFFLUX SYSTEM COMPONENT YKNX-RELATED"/>
    <property type="match status" value="1"/>
</dbReference>
<dbReference type="PANTHER" id="PTHR32347:SF29">
    <property type="entry name" value="UPF0194 MEMBRANE PROTEIN YBHG"/>
    <property type="match status" value="1"/>
</dbReference>
<dbReference type="Pfam" id="PF16576">
    <property type="entry name" value="HlyD_D23"/>
    <property type="match status" value="1"/>
</dbReference>
<dbReference type="SUPFAM" id="SSF111369">
    <property type="entry name" value="HlyD-like secretion proteins"/>
    <property type="match status" value="2"/>
</dbReference>
<dbReference type="SUPFAM" id="SSF56954">
    <property type="entry name" value="Outer membrane efflux proteins (OEP)"/>
    <property type="match status" value="1"/>
</dbReference>
<accession>A1A936</accession>
<protein>
    <recommendedName>
        <fullName evidence="1">UPF0194 membrane protein YbhG</fullName>
    </recommendedName>
</protein>
<proteinExistence type="inferred from homology"/>
<evidence type="ECO:0000255" key="1">
    <source>
        <dbReference type="HAMAP-Rule" id="MF_01304"/>
    </source>
</evidence>
<reference key="1">
    <citation type="journal article" date="2007" name="J. Bacteriol.">
        <title>The genome sequence of avian pathogenic Escherichia coli strain O1:K1:H7 shares strong similarities with human extraintestinal pathogenic E. coli genomes.</title>
        <authorList>
            <person name="Johnson T.J."/>
            <person name="Kariyawasam S."/>
            <person name="Wannemuehler Y."/>
            <person name="Mangiamele P."/>
            <person name="Johnson S.J."/>
            <person name="Doetkott C."/>
            <person name="Skyberg J.A."/>
            <person name="Lynne A.M."/>
            <person name="Johnson J.R."/>
            <person name="Nolan L.K."/>
        </authorList>
    </citation>
    <scope>NUCLEOTIDE SEQUENCE [LARGE SCALE GENOMIC DNA]</scope>
</reference>